<reference key="1">
    <citation type="journal article" date="2006" name="BMC Genomics">
        <title>The complete chloroplast genome sequence of Gossypium hirsutum: organization and phylogenetic relationships to other angiosperms.</title>
        <authorList>
            <person name="Lee S.-B."/>
            <person name="Kaittanis C."/>
            <person name="Jansen R.K."/>
            <person name="Hostetler J.B."/>
            <person name="Tallon L.J."/>
            <person name="Town C.D."/>
            <person name="Daniell H."/>
        </authorList>
    </citation>
    <scope>NUCLEOTIDE SEQUENCE [LARGE SCALE GENOMIC DNA]</scope>
    <source>
        <strain>cv. Coker 310FR</strain>
    </source>
</reference>
<feature type="chain" id="PRO_0000276948" description="Small ribosomal subunit protein bS16c">
    <location>
        <begin position="1"/>
        <end position="88"/>
    </location>
</feature>
<name>RR16_GOSHI</name>
<proteinExistence type="inferred from homology"/>
<accession>Q2L8Y7</accession>
<dbReference type="EMBL" id="DQ345959">
    <property type="protein sequence ID" value="ABC73610.1"/>
    <property type="molecule type" value="Genomic_DNA"/>
</dbReference>
<dbReference type="RefSeq" id="YP_538917.1">
    <property type="nucleotide sequence ID" value="NC_007944.1"/>
</dbReference>
<dbReference type="SMR" id="Q2L8Y7"/>
<dbReference type="GeneID" id="3989183"/>
<dbReference type="KEGG" id="ghi:3989183"/>
<dbReference type="OrthoDB" id="13181at41938"/>
<dbReference type="Proteomes" id="UP000189702">
    <property type="component" value="Chloroplast Pltd"/>
</dbReference>
<dbReference type="GO" id="GO:0009507">
    <property type="term" value="C:chloroplast"/>
    <property type="evidence" value="ECO:0007669"/>
    <property type="project" value="UniProtKB-SubCell"/>
</dbReference>
<dbReference type="GO" id="GO:0015935">
    <property type="term" value="C:small ribosomal subunit"/>
    <property type="evidence" value="ECO:0000318"/>
    <property type="project" value="GO_Central"/>
</dbReference>
<dbReference type="GO" id="GO:0003735">
    <property type="term" value="F:structural constituent of ribosome"/>
    <property type="evidence" value="ECO:0000318"/>
    <property type="project" value="GO_Central"/>
</dbReference>
<dbReference type="GO" id="GO:0006412">
    <property type="term" value="P:translation"/>
    <property type="evidence" value="ECO:0007669"/>
    <property type="project" value="UniProtKB-UniRule"/>
</dbReference>
<dbReference type="FunFam" id="3.30.1320.10:FF:000003">
    <property type="entry name" value="30S ribosomal protein S16, chloroplastic"/>
    <property type="match status" value="1"/>
</dbReference>
<dbReference type="Gene3D" id="3.30.1320.10">
    <property type="match status" value="1"/>
</dbReference>
<dbReference type="HAMAP" id="MF_00385">
    <property type="entry name" value="Ribosomal_bS16"/>
    <property type="match status" value="1"/>
</dbReference>
<dbReference type="InterPro" id="IPR000307">
    <property type="entry name" value="Ribosomal_bS16"/>
</dbReference>
<dbReference type="InterPro" id="IPR020592">
    <property type="entry name" value="Ribosomal_bS16_CS"/>
</dbReference>
<dbReference type="InterPro" id="IPR023803">
    <property type="entry name" value="Ribosomal_bS16_dom_sf"/>
</dbReference>
<dbReference type="NCBIfam" id="TIGR00002">
    <property type="entry name" value="S16"/>
    <property type="match status" value="1"/>
</dbReference>
<dbReference type="PANTHER" id="PTHR12919">
    <property type="entry name" value="30S RIBOSOMAL PROTEIN S16"/>
    <property type="match status" value="1"/>
</dbReference>
<dbReference type="PANTHER" id="PTHR12919:SF20">
    <property type="entry name" value="SMALL RIBOSOMAL SUBUNIT PROTEIN BS16M"/>
    <property type="match status" value="1"/>
</dbReference>
<dbReference type="Pfam" id="PF00886">
    <property type="entry name" value="Ribosomal_S16"/>
    <property type="match status" value="1"/>
</dbReference>
<dbReference type="SUPFAM" id="SSF54565">
    <property type="entry name" value="Ribosomal protein S16"/>
    <property type="match status" value="1"/>
</dbReference>
<dbReference type="PROSITE" id="PS00732">
    <property type="entry name" value="RIBOSOMAL_S16"/>
    <property type="match status" value="1"/>
</dbReference>
<sequence>MVKLRLKRCGRKQRAVYRIVAIDVRSRREGRDLRKVGFYDPINNQTYLNVPAILYFLEKGAQPTATVHDILKKAGVFTELTLNQTKFT</sequence>
<geneLocation type="chloroplast"/>
<keyword id="KW-0150">Chloroplast</keyword>
<keyword id="KW-0934">Plastid</keyword>
<keyword id="KW-1185">Reference proteome</keyword>
<keyword id="KW-0687">Ribonucleoprotein</keyword>
<keyword id="KW-0689">Ribosomal protein</keyword>
<protein>
    <recommendedName>
        <fullName evidence="1">Small ribosomal subunit protein bS16c</fullName>
    </recommendedName>
    <alternativeName>
        <fullName evidence="2">30S ribosomal protein S16, chloroplastic</fullName>
    </alternativeName>
</protein>
<organism>
    <name type="scientific">Gossypium hirsutum</name>
    <name type="common">Upland cotton</name>
    <name type="synonym">Gossypium mexicanum</name>
    <dbReference type="NCBI Taxonomy" id="3635"/>
    <lineage>
        <taxon>Eukaryota</taxon>
        <taxon>Viridiplantae</taxon>
        <taxon>Streptophyta</taxon>
        <taxon>Embryophyta</taxon>
        <taxon>Tracheophyta</taxon>
        <taxon>Spermatophyta</taxon>
        <taxon>Magnoliopsida</taxon>
        <taxon>eudicotyledons</taxon>
        <taxon>Gunneridae</taxon>
        <taxon>Pentapetalae</taxon>
        <taxon>rosids</taxon>
        <taxon>malvids</taxon>
        <taxon>Malvales</taxon>
        <taxon>Malvaceae</taxon>
        <taxon>Malvoideae</taxon>
        <taxon>Gossypium</taxon>
    </lineage>
</organism>
<gene>
    <name evidence="1" type="primary">rps16</name>
</gene>
<evidence type="ECO:0000255" key="1">
    <source>
        <dbReference type="HAMAP-Rule" id="MF_00385"/>
    </source>
</evidence>
<evidence type="ECO:0000305" key="2"/>
<comment type="subcellular location">
    <subcellularLocation>
        <location>Plastid</location>
        <location>Chloroplast</location>
    </subcellularLocation>
</comment>
<comment type="similarity">
    <text evidence="1">Belongs to the bacterial ribosomal protein bS16 family.</text>
</comment>